<feature type="chain" id="PRO_0000136341" description="Phosphoribosyl-ATP pyrophosphatase">
    <location>
        <begin position="1"/>
        <end position="111"/>
    </location>
</feature>
<dbReference type="EC" id="3.6.1.31"/>
<dbReference type="EMBL" id="X61207">
    <property type="protein sequence ID" value="CAA43520.1"/>
    <property type="molecule type" value="Genomic_DNA"/>
</dbReference>
<dbReference type="PIR" id="S16803">
    <property type="entry name" value="S16803"/>
</dbReference>
<dbReference type="RefSeq" id="WP_035670299.1">
    <property type="nucleotide sequence ID" value="NZ_CP012914.1"/>
</dbReference>
<dbReference type="SMR" id="P26722"/>
<dbReference type="GeneID" id="56449787"/>
<dbReference type="UniPathway" id="UPA00031">
    <property type="reaction ID" value="UER00007"/>
</dbReference>
<dbReference type="GO" id="GO:0005737">
    <property type="term" value="C:cytoplasm"/>
    <property type="evidence" value="ECO:0007669"/>
    <property type="project" value="UniProtKB-SubCell"/>
</dbReference>
<dbReference type="GO" id="GO:0005524">
    <property type="term" value="F:ATP binding"/>
    <property type="evidence" value="ECO:0007669"/>
    <property type="project" value="UniProtKB-KW"/>
</dbReference>
<dbReference type="GO" id="GO:0004636">
    <property type="term" value="F:phosphoribosyl-ATP diphosphatase activity"/>
    <property type="evidence" value="ECO:0007669"/>
    <property type="project" value="UniProtKB-UniRule"/>
</dbReference>
<dbReference type="GO" id="GO:0000105">
    <property type="term" value="P:L-histidine biosynthetic process"/>
    <property type="evidence" value="ECO:0007669"/>
    <property type="project" value="UniProtKB-UniRule"/>
</dbReference>
<dbReference type="CDD" id="cd11534">
    <property type="entry name" value="NTP-PPase_HisIE_like"/>
    <property type="match status" value="1"/>
</dbReference>
<dbReference type="FunFam" id="1.10.287.1080:FF:000002">
    <property type="entry name" value="Histidine biosynthesis bifunctional protein HisIE"/>
    <property type="match status" value="1"/>
</dbReference>
<dbReference type="Gene3D" id="1.10.287.1080">
    <property type="entry name" value="MazG-like"/>
    <property type="match status" value="1"/>
</dbReference>
<dbReference type="HAMAP" id="MF_01020">
    <property type="entry name" value="HisE"/>
    <property type="match status" value="1"/>
</dbReference>
<dbReference type="InterPro" id="IPR008179">
    <property type="entry name" value="HisE"/>
</dbReference>
<dbReference type="InterPro" id="IPR021130">
    <property type="entry name" value="PRib-ATP_PPHydrolase-like"/>
</dbReference>
<dbReference type="NCBIfam" id="TIGR03188">
    <property type="entry name" value="histidine_hisI"/>
    <property type="match status" value="1"/>
</dbReference>
<dbReference type="NCBIfam" id="NF001611">
    <property type="entry name" value="PRK00400.1-3"/>
    <property type="match status" value="1"/>
</dbReference>
<dbReference type="NCBIfam" id="NF001613">
    <property type="entry name" value="PRK00400.1-5"/>
    <property type="match status" value="1"/>
</dbReference>
<dbReference type="PANTHER" id="PTHR42945">
    <property type="entry name" value="HISTIDINE BIOSYNTHESIS BIFUNCTIONAL PROTEIN"/>
    <property type="match status" value="1"/>
</dbReference>
<dbReference type="PANTHER" id="PTHR42945:SF9">
    <property type="entry name" value="HISTIDINE BIOSYNTHESIS BIFUNCTIONAL PROTEIN HISIE"/>
    <property type="match status" value="1"/>
</dbReference>
<dbReference type="Pfam" id="PF01503">
    <property type="entry name" value="PRA-PH"/>
    <property type="match status" value="1"/>
</dbReference>
<dbReference type="SUPFAM" id="SSF101386">
    <property type="entry name" value="all-alpha NTP pyrophosphatases"/>
    <property type="match status" value="1"/>
</dbReference>
<gene>
    <name type="primary">hisE</name>
</gene>
<name>HIS2_AZOBR</name>
<comment type="catalytic activity">
    <reaction>
        <text>1-(5-phospho-beta-D-ribosyl)-ATP + H2O = 1-(5-phospho-beta-D-ribosyl)-5'-AMP + diphosphate + H(+)</text>
        <dbReference type="Rhea" id="RHEA:22828"/>
        <dbReference type="ChEBI" id="CHEBI:15377"/>
        <dbReference type="ChEBI" id="CHEBI:15378"/>
        <dbReference type="ChEBI" id="CHEBI:33019"/>
        <dbReference type="ChEBI" id="CHEBI:59457"/>
        <dbReference type="ChEBI" id="CHEBI:73183"/>
        <dbReference type="EC" id="3.6.1.31"/>
    </reaction>
</comment>
<comment type="pathway">
    <text>Amino-acid biosynthesis; L-histidine biosynthesis; L-histidine from 5-phospho-alpha-D-ribose 1-diphosphate: step 2/9.</text>
</comment>
<comment type="subcellular location">
    <subcellularLocation>
        <location evidence="1">Cytoplasm</location>
    </subcellularLocation>
</comment>
<comment type="similarity">
    <text evidence="2">Belongs to the PRA-PH family.</text>
</comment>
<evidence type="ECO:0000250" key="1"/>
<evidence type="ECO:0000305" key="2"/>
<accession>P26722</accession>
<protein>
    <recommendedName>
        <fullName>Phosphoribosyl-ATP pyrophosphatase</fullName>
        <shortName>PRA-PH</shortName>
        <ecNumber>3.6.1.31</ecNumber>
    </recommendedName>
</protein>
<reference key="1">
    <citation type="journal article" date="1989" name="Mol. Gen. Genet.">
        <title>Cloning of histidine genes of Azospirillum brasilense: organization of the ABFH gene cluster and nucleotide sequence of the hisB gene.</title>
        <authorList>
            <person name="Fani R."/>
            <person name="Bazzicalupo M."/>
            <person name="Damiani G."/>
            <person name="Bianchi A."/>
            <person name="Schipani C."/>
            <person name="Sgaramella V."/>
            <person name="Polsinelli M."/>
        </authorList>
    </citation>
    <scope>NUCLEOTIDE SEQUENCE [GENOMIC DNA]</scope>
    <source>
        <strain>Sp6</strain>
    </source>
</reference>
<proteinExistence type="inferred from homology"/>
<organism>
    <name type="scientific">Azospirillum brasilense</name>
    <dbReference type="NCBI Taxonomy" id="192"/>
    <lineage>
        <taxon>Bacteria</taxon>
        <taxon>Pseudomonadati</taxon>
        <taxon>Pseudomonadota</taxon>
        <taxon>Alphaproteobacteria</taxon>
        <taxon>Rhodospirillales</taxon>
        <taxon>Azospirillaceae</taxon>
        <taxon>Azospirillum</taxon>
    </lineage>
</organism>
<sequence length="111" mass="11946">MAEDKISAAVLDRLYATVQARKGADPETSYTAKLFHRGTAKIAQKVGEEAVETVIEAVRGDKAAMASESADLLYHLMVLWADAGLEPAAVWEKLAQREGTSGIAEKNARKS</sequence>
<keyword id="KW-0028">Amino-acid biosynthesis</keyword>
<keyword id="KW-0067">ATP-binding</keyword>
<keyword id="KW-0963">Cytoplasm</keyword>
<keyword id="KW-0368">Histidine biosynthesis</keyword>
<keyword id="KW-0378">Hydrolase</keyword>
<keyword id="KW-0547">Nucleotide-binding</keyword>